<proteinExistence type="predicted"/>
<protein>
    <recommendedName>
        <fullName>Uncharacterized 7.8 kDa protein in ral-gp17 intergenic region</fullName>
    </recommendedName>
    <alternativeName>
        <fullName>ORF67</fullName>
    </alternativeName>
</protein>
<keyword id="KW-1185">Reference proteome</keyword>
<organismHost>
    <name type="scientific">Salmonella typhimurium</name>
    <dbReference type="NCBI Taxonomy" id="90371"/>
</organismHost>
<reference key="1">
    <citation type="journal article" date="1989" name="J. Mol. Biol.">
        <title>Genetic structure of the bacteriophage P22 PL operon.</title>
        <authorList>
            <person name="Semerjian A.V."/>
            <person name="Malloy D.C."/>
            <person name="Poteete A.R."/>
        </authorList>
    </citation>
    <scope>NUCLEOTIDE SEQUENCE [GENOMIC DNA]</scope>
</reference>
<reference key="2">
    <citation type="journal article" date="2000" name="J. Bacteriol.">
        <title>Sequence of the genome of Salmonella bacteriophage P22.</title>
        <authorList>
            <person name="Vander Byl C.S."/>
            <person name="Kropinski A.M.B."/>
        </authorList>
    </citation>
    <scope>NUCLEOTIDE SEQUENCE [LARGE SCALE GENOMIC DNA]</scope>
</reference>
<reference key="3">
    <citation type="journal article" date="2003" name="J. Bacteriol.">
        <title>Corrected sequence of the bacteriophage P22 genome.</title>
        <authorList>
            <person name="Pedulla M.L."/>
            <person name="Ford M.E."/>
            <person name="Karthikeyan T."/>
            <person name="Houtz J.M."/>
            <person name="Hendrix R.W."/>
            <person name="Hatfull G.F."/>
            <person name="Poteete A.R."/>
            <person name="Gilcrease E.B."/>
            <person name="Winn-Stapley D.A."/>
            <person name="Casjens S.R."/>
        </authorList>
    </citation>
    <scope>NUCLEOTIDE SEQUENCE [LARGE SCALE GENOMIC DNA]</scope>
</reference>
<dbReference type="EMBL" id="X15637">
    <property type="protein sequence ID" value="CAA33649.1"/>
    <property type="status" value="ALT_INIT"/>
    <property type="molecule type" value="Genomic_DNA"/>
</dbReference>
<dbReference type="EMBL" id="AF217253">
    <property type="protein sequence ID" value="AAF75019.1"/>
    <property type="molecule type" value="Genomic_DNA"/>
</dbReference>
<dbReference type="EMBL" id="BK000583">
    <property type="protein sequence ID" value="DAA01016.1"/>
    <property type="molecule type" value="Genomic_DNA"/>
</dbReference>
<dbReference type="PIR" id="S15699">
    <property type="entry name" value="S15699"/>
</dbReference>
<dbReference type="RefSeq" id="NP_059601.1">
    <property type="nucleotide sequence ID" value="NC_002371.2"/>
</dbReference>
<dbReference type="GeneID" id="1262791"/>
<dbReference type="KEGG" id="vg:1262791"/>
<dbReference type="OrthoDB" id="21071at10239"/>
<dbReference type="Proteomes" id="UP000001795">
    <property type="component" value="Segment"/>
</dbReference>
<dbReference type="Proteomes" id="UP000007960">
    <property type="component" value="Segment"/>
</dbReference>
<dbReference type="InterPro" id="IPR007539">
    <property type="entry name" value="DUF551"/>
</dbReference>
<dbReference type="Pfam" id="PF04448">
    <property type="entry name" value="DUF551"/>
    <property type="match status" value="1"/>
</dbReference>
<comment type="sequence caution" evidence="1">
    <conflict type="erroneous initiation">
        <sequence resource="EMBL-CDS" id="CAA33649"/>
    </conflict>
</comment>
<evidence type="ECO:0000305" key="1"/>
<accession>P14108</accession>
<accession>Q7PCF7</accession>
<feature type="chain" id="PRO_0000077780" description="Uncharacterized 7.8 kDa protein in ral-gp17 intergenic region">
    <location>
        <begin position="1"/>
        <end position="67"/>
    </location>
</feature>
<name>Y7K8_BPP22</name>
<organism>
    <name type="scientific">Salmonella phage P22</name>
    <name type="common">Bacteriophage P22</name>
    <dbReference type="NCBI Taxonomy" id="10754"/>
    <lineage>
        <taxon>Viruses</taxon>
        <taxon>Duplodnaviria</taxon>
        <taxon>Heunggongvirae</taxon>
        <taxon>Uroviricota</taxon>
        <taxon>Caudoviricetes</taxon>
        <taxon>Lederbergvirus</taxon>
    </lineage>
</organism>
<sequence length="67" mass="7781">MEWIKCSERMPESGITVLGYCVCNSNFSGIYTMRKPVIEAKNSKQDTRLIKHERVTHWMPLPEPPSE</sequence>